<protein>
    <recommendedName>
        <fullName>Protein FPV195</fullName>
    </recommendedName>
</protein>
<gene>
    <name type="ordered locus">FPV195</name>
</gene>
<accession>Q9J538</accession>
<organismHost>
    <name type="scientific">Vertebrata</name>
    <dbReference type="NCBI Taxonomy" id="7742"/>
</organismHost>
<name>V195_FOWPN</name>
<sequence>MEIFELISENEKYFNGIPIILPKKKKTYVYKNITFIFYIPSDNKIEQYIQRSELHYSDFIVYGKVIIDDVEMLLLYVNFEYYGISIDGKTKYLGKSIKDLKIRGTKRWKDFTH</sequence>
<dbReference type="EMBL" id="AF198100">
    <property type="protein sequence ID" value="AAF44539.1"/>
    <property type="molecule type" value="Genomic_DNA"/>
</dbReference>
<dbReference type="RefSeq" id="NP_039158.1">
    <property type="nucleotide sequence ID" value="NC_002188.1"/>
</dbReference>
<dbReference type="GeneID" id="1486767"/>
<dbReference type="KEGG" id="vg:1486767"/>
<dbReference type="Proteomes" id="UP000008597">
    <property type="component" value="Segment"/>
</dbReference>
<dbReference type="InterPro" id="IPR008786">
    <property type="entry name" value="Poxvirus_A31"/>
</dbReference>
<dbReference type="Pfam" id="PF05771">
    <property type="entry name" value="Pox_A31"/>
    <property type="match status" value="1"/>
</dbReference>
<feature type="chain" id="PRO_0000099312" description="Protein FPV195">
    <location>
        <begin position="1"/>
        <end position="113"/>
    </location>
</feature>
<evidence type="ECO:0000305" key="1"/>
<proteinExistence type="inferred from homology"/>
<reference key="1">
    <citation type="journal article" date="2000" name="J. Virol.">
        <title>The genome of fowlpox virus.</title>
        <authorList>
            <person name="Afonso C.L."/>
            <person name="Tulman E.R."/>
            <person name="Lu Z."/>
            <person name="Zsak L."/>
            <person name="Kutish G.F."/>
            <person name="Rock D.L."/>
        </authorList>
    </citation>
    <scope>NUCLEOTIDE SEQUENCE [LARGE SCALE GENOMIC DNA]</scope>
</reference>
<organism>
    <name type="scientific">Fowlpox virus (strain NVSL)</name>
    <name type="common">FPV</name>
    <dbReference type="NCBI Taxonomy" id="928301"/>
    <lineage>
        <taxon>Viruses</taxon>
        <taxon>Varidnaviria</taxon>
        <taxon>Bamfordvirae</taxon>
        <taxon>Nucleocytoviricota</taxon>
        <taxon>Pokkesviricetes</taxon>
        <taxon>Chitovirales</taxon>
        <taxon>Poxviridae</taxon>
        <taxon>Chordopoxvirinae</taxon>
        <taxon>Avipoxvirus</taxon>
        <taxon>Fowlpox virus</taxon>
    </lineage>
</organism>
<keyword id="KW-1185">Reference proteome</keyword>
<comment type="similarity">
    <text evidence="1">Belongs to the poxviruses A31 family.</text>
</comment>